<protein>
    <recommendedName>
        <fullName>Uncharacterized protein YgiM</fullName>
    </recommendedName>
</protein>
<keyword id="KW-0472">Membrane</keyword>
<keyword id="KW-1185">Reference proteome</keyword>
<keyword id="KW-0732">Signal</keyword>
<keyword id="KW-0812">Transmembrane</keyword>
<keyword id="KW-1133">Transmembrane helix</keyword>
<proteinExistence type="inferred from homology"/>
<feature type="signal peptide" evidence="1">
    <location>
        <begin position="1"/>
        <end position="22"/>
    </location>
</feature>
<feature type="chain" id="PRO_0000043106" description="Uncharacterized protein YgiM">
    <location>
        <begin position="23"/>
        <end position="206"/>
    </location>
</feature>
<feature type="transmembrane region" description="Helical" evidence="1">
    <location>
        <begin position="169"/>
        <end position="191"/>
    </location>
</feature>
<feature type="domain" description="SH3b" evidence="2">
    <location>
        <begin position="23"/>
        <end position="89"/>
    </location>
</feature>
<sequence length="206" mass="23076">MPKLRLIGLTLLALSATAVSHAEETRYVSDELNTWVRSGPGDHYRLVGTVNAGEEVTLLQTDANTNYAQVKDSSGRTAWIPLKQLSTEPSLRSRVPDLENQVKTLTDKLTNIDNTWNQRTAEMQQKVAQSDSVINGLKEENQKLKNELIVAQKKVDAASVQLDDKQRTIIMQWFMYGGGVLGLGLLLGLVLPHLIPSRKRKDRWMN</sequence>
<organism>
    <name type="scientific">Escherichia coli O6:H1 (strain CFT073 / ATCC 700928 / UPEC)</name>
    <dbReference type="NCBI Taxonomy" id="199310"/>
    <lineage>
        <taxon>Bacteria</taxon>
        <taxon>Pseudomonadati</taxon>
        <taxon>Pseudomonadota</taxon>
        <taxon>Gammaproteobacteria</taxon>
        <taxon>Enterobacterales</taxon>
        <taxon>Enterobacteriaceae</taxon>
        <taxon>Escherichia</taxon>
    </lineage>
</organism>
<evidence type="ECO:0000255" key="1"/>
<evidence type="ECO:0000255" key="2">
    <source>
        <dbReference type="PROSITE-ProRule" id="PRU01117"/>
    </source>
</evidence>
<evidence type="ECO:0000305" key="3"/>
<comment type="subcellular location">
    <subcellularLocation>
        <location evidence="3">Membrane</location>
        <topology evidence="3">Single-pass membrane protein</topology>
    </subcellularLocation>
</comment>
<comment type="similarity">
    <text evidence="3">To H.influenzae HI_1605.</text>
</comment>
<dbReference type="EMBL" id="AE014075">
    <property type="protein sequence ID" value="AAN82250.1"/>
    <property type="molecule type" value="Genomic_DNA"/>
</dbReference>
<dbReference type="RefSeq" id="WP_001125331.1">
    <property type="nucleotide sequence ID" value="NZ_CP051263.1"/>
</dbReference>
<dbReference type="SMR" id="P0ADT9"/>
<dbReference type="STRING" id="199310.c3805"/>
<dbReference type="KEGG" id="ecc:c3805"/>
<dbReference type="eggNOG" id="COG4991">
    <property type="taxonomic scope" value="Bacteria"/>
</dbReference>
<dbReference type="HOGENOM" id="CLU_094106_0_1_6"/>
<dbReference type="BioCyc" id="ECOL199310:C3805-MONOMER"/>
<dbReference type="Proteomes" id="UP000001410">
    <property type="component" value="Chromosome"/>
</dbReference>
<dbReference type="GO" id="GO:0016020">
    <property type="term" value="C:membrane"/>
    <property type="evidence" value="ECO:0007669"/>
    <property type="project" value="UniProtKB-SubCell"/>
</dbReference>
<dbReference type="FunFam" id="2.30.30.40:FF:000104">
    <property type="entry name" value="Bacterial SH3 domain protein"/>
    <property type="match status" value="1"/>
</dbReference>
<dbReference type="Gene3D" id="1.20.1170.10">
    <property type="match status" value="1"/>
</dbReference>
<dbReference type="Gene3D" id="2.30.30.40">
    <property type="entry name" value="SH3 Domains"/>
    <property type="match status" value="1"/>
</dbReference>
<dbReference type="InterPro" id="IPR003646">
    <property type="entry name" value="SH3-like_bac-type"/>
</dbReference>
<dbReference type="InterPro" id="IPR016476">
    <property type="entry name" value="SH3_dom_pro"/>
</dbReference>
<dbReference type="NCBIfam" id="TIGR04211">
    <property type="entry name" value="SH3_and_anchor"/>
    <property type="match status" value="1"/>
</dbReference>
<dbReference type="Pfam" id="PF08239">
    <property type="entry name" value="SH3_3"/>
    <property type="match status" value="1"/>
</dbReference>
<dbReference type="PIRSF" id="PIRSF006158">
    <property type="entry name" value="UCP006158_SH3"/>
    <property type="match status" value="1"/>
</dbReference>
<dbReference type="SMART" id="SM00287">
    <property type="entry name" value="SH3b"/>
    <property type="match status" value="1"/>
</dbReference>
<dbReference type="PROSITE" id="PS51781">
    <property type="entry name" value="SH3B"/>
    <property type="match status" value="1"/>
</dbReference>
<gene>
    <name type="primary">ygiM</name>
    <name type="ordered locus">c3805</name>
</gene>
<accession>P0ADT9</accession>
<accession>P39202</accession>
<name>YGIM_ECOL6</name>
<reference key="1">
    <citation type="journal article" date="2002" name="Proc. Natl. Acad. Sci. U.S.A.">
        <title>Extensive mosaic structure revealed by the complete genome sequence of uropathogenic Escherichia coli.</title>
        <authorList>
            <person name="Welch R.A."/>
            <person name="Burland V."/>
            <person name="Plunkett G. III"/>
            <person name="Redford P."/>
            <person name="Roesch P."/>
            <person name="Rasko D."/>
            <person name="Buckles E.L."/>
            <person name="Liou S.-R."/>
            <person name="Boutin A."/>
            <person name="Hackett J."/>
            <person name="Stroud D."/>
            <person name="Mayhew G.F."/>
            <person name="Rose D.J."/>
            <person name="Zhou S."/>
            <person name="Schwartz D.C."/>
            <person name="Perna N.T."/>
            <person name="Mobley H.L.T."/>
            <person name="Donnenberg M.S."/>
            <person name="Blattner F.R."/>
        </authorList>
    </citation>
    <scope>NUCLEOTIDE SEQUENCE [LARGE SCALE GENOMIC DNA]</scope>
    <source>
        <strain>CFT073 / ATCC 700928 / UPEC</strain>
    </source>
</reference>